<keyword id="KW-0028">Amino-acid biosynthesis</keyword>
<keyword id="KW-0963">Cytoplasm</keyword>
<keyword id="KW-0554">One-carbon metabolism</keyword>
<keyword id="KW-0663">Pyridoxal phosphate</keyword>
<keyword id="KW-1185">Reference proteome</keyword>
<keyword id="KW-0808">Transferase</keyword>
<sequence>MTRTNSDFLTNSDPAIAGLINQELQRQRDHLELIASENFTSAAVLAAQGSVLTNKYAEGLPGKRYYGGCEFIDKIEQIAIDRAKQLFGADHANVQPHSGAQANFAVFLTLLKPGDKIMGMDLSHGGHLTHGSPVNVSGKWFQVCHYGVSQQTEQLDYDQIRELALRERPKLLICGYSAYPRIIDFEKFRSIADEVGAYLLADIAHIAGLVATGLHPNPLPYCDVVTTTTHKTLRGPRGGLILTRDAELGKKLDKSVFPGTQGGPLEHVIAGKAVAFGEALKPEFQGYSAQVIDNARTLANQLQTRGLKLVSDGTDNHLMLVDLRSVNMTGKRADQLVSEVNITANKNTVPFDPQSPFVTSGLRLGSPAMTTRGMGEAEFTEIGNIIADRLLNPDSDTVAQDCKRRVAALCDRFPLYPHLEIPVPVLA</sequence>
<feature type="chain" id="PRO_0000113521" description="Serine hydroxymethyltransferase">
    <location>
        <begin position="1"/>
        <end position="427"/>
    </location>
</feature>
<feature type="binding site" evidence="1">
    <location>
        <position position="122"/>
    </location>
    <ligand>
        <name>(6S)-5,6,7,8-tetrahydrofolate</name>
        <dbReference type="ChEBI" id="CHEBI:57453"/>
    </ligand>
</feature>
<feature type="binding site" evidence="1">
    <location>
        <begin position="126"/>
        <end position="128"/>
    </location>
    <ligand>
        <name>(6S)-5,6,7,8-tetrahydrofolate</name>
        <dbReference type="ChEBI" id="CHEBI:57453"/>
    </ligand>
</feature>
<feature type="binding site" evidence="1">
    <location>
        <begin position="355"/>
        <end position="357"/>
    </location>
    <ligand>
        <name>(6S)-5,6,7,8-tetrahydrofolate</name>
        <dbReference type="ChEBI" id="CHEBI:57453"/>
    </ligand>
</feature>
<feature type="site" description="Plays an important role in substrate specificity" evidence="1">
    <location>
        <position position="230"/>
    </location>
</feature>
<feature type="modified residue" description="N6-(pyridoxal phosphate)lysine" evidence="1">
    <location>
        <position position="231"/>
    </location>
</feature>
<comment type="function">
    <text evidence="1">Catalyzes the reversible interconversion of serine and glycine with tetrahydrofolate (THF) serving as the one-carbon carrier. This reaction serves as the major source of one-carbon groups required for the biosynthesis of purines, thymidylate, methionine, and other important biomolecules. Also exhibits THF-independent aldolase activity toward beta-hydroxyamino acids, producing glycine and aldehydes, via a retro-aldol mechanism.</text>
</comment>
<comment type="catalytic activity">
    <reaction evidence="1">
        <text>(6R)-5,10-methylene-5,6,7,8-tetrahydrofolate + glycine + H2O = (6S)-5,6,7,8-tetrahydrofolate + L-serine</text>
        <dbReference type="Rhea" id="RHEA:15481"/>
        <dbReference type="ChEBI" id="CHEBI:15377"/>
        <dbReference type="ChEBI" id="CHEBI:15636"/>
        <dbReference type="ChEBI" id="CHEBI:33384"/>
        <dbReference type="ChEBI" id="CHEBI:57305"/>
        <dbReference type="ChEBI" id="CHEBI:57453"/>
        <dbReference type="EC" id="2.1.2.1"/>
    </reaction>
</comment>
<comment type="cofactor">
    <cofactor evidence="1">
        <name>pyridoxal 5'-phosphate</name>
        <dbReference type="ChEBI" id="CHEBI:597326"/>
    </cofactor>
</comment>
<comment type="pathway">
    <text evidence="1">One-carbon metabolism; tetrahydrofolate interconversion.</text>
</comment>
<comment type="pathway">
    <text evidence="1">Amino-acid biosynthesis; glycine biosynthesis; glycine from L-serine: step 1/1.</text>
</comment>
<comment type="subunit">
    <text evidence="1">Homodimer.</text>
</comment>
<comment type="subcellular location">
    <subcellularLocation>
        <location evidence="1">Cytoplasm</location>
    </subcellularLocation>
</comment>
<comment type="similarity">
    <text evidence="1">Belongs to the SHMT family.</text>
</comment>
<protein>
    <recommendedName>
        <fullName evidence="1">Serine hydroxymethyltransferase</fullName>
        <shortName evidence="1">SHMT</shortName>
        <shortName evidence="1">Serine methylase</shortName>
        <ecNumber evidence="1">2.1.2.1</ecNumber>
    </recommendedName>
</protein>
<dbReference type="EC" id="2.1.2.1" evidence="1"/>
<dbReference type="EMBL" id="BA000019">
    <property type="protein sequence ID" value="BAB76505.1"/>
    <property type="molecule type" value="Genomic_DNA"/>
</dbReference>
<dbReference type="PIR" id="AF2406">
    <property type="entry name" value="AF2406"/>
</dbReference>
<dbReference type="RefSeq" id="WP_010998936.1">
    <property type="nucleotide sequence ID" value="NZ_RSCN01000035.1"/>
</dbReference>
<dbReference type="SMR" id="Q8YMW8"/>
<dbReference type="STRING" id="103690.gene:10496859"/>
<dbReference type="KEGG" id="ana:alr4806"/>
<dbReference type="eggNOG" id="COG0112">
    <property type="taxonomic scope" value="Bacteria"/>
</dbReference>
<dbReference type="OrthoDB" id="9803846at2"/>
<dbReference type="UniPathway" id="UPA00193"/>
<dbReference type="UniPathway" id="UPA00288">
    <property type="reaction ID" value="UER01023"/>
</dbReference>
<dbReference type="Proteomes" id="UP000002483">
    <property type="component" value="Chromosome"/>
</dbReference>
<dbReference type="GO" id="GO:0005829">
    <property type="term" value="C:cytosol"/>
    <property type="evidence" value="ECO:0007669"/>
    <property type="project" value="TreeGrafter"/>
</dbReference>
<dbReference type="GO" id="GO:0004372">
    <property type="term" value="F:glycine hydroxymethyltransferase activity"/>
    <property type="evidence" value="ECO:0007669"/>
    <property type="project" value="UniProtKB-UniRule"/>
</dbReference>
<dbReference type="GO" id="GO:0030170">
    <property type="term" value="F:pyridoxal phosphate binding"/>
    <property type="evidence" value="ECO:0007669"/>
    <property type="project" value="UniProtKB-UniRule"/>
</dbReference>
<dbReference type="GO" id="GO:0019264">
    <property type="term" value="P:glycine biosynthetic process from serine"/>
    <property type="evidence" value="ECO:0007669"/>
    <property type="project" value="UniProtKB-UniRule"/>
</dbReference>
<dbReference type="GO" id="GO:0035999">
    <property type="term" value="P:tetrahydrofolate interconversion"/>
    <property type="evidence" value="ECO:0007669"/>
    <property type="project" value="UniProtKB-UniRule"/>
</dbReference>
<dbReference type="CDD" id="cd00378">
    <property type="entry name" value="SHMT"/>
    <property type="match status" value="1"/>
</dbReference>
<dbReference type="FunFam" id="3.40.640.10:FF:000001">
    <property type="entry name" value="Serine hydroxymethyltransferase"/>
    <property type="match status" value="1"/>
</dbReference>
<dbReference type="FunFam" id="3.90.1150.10:FF:000003">
    <property type="entry name" value="Serine hydroxymethyltransferase"/>
    <property type="match status" value="1"/>
</dbReference>
<dbReference type="Gene3D" id="3.90.1150.10">
    <property type="entry name" value="Aspartate Aminotransferase, domain 1"/>
    <property type="match status" value="1"/>
</dbReference>
<dbReference type="Gene3D" id="3.40.640.10">
    <property type="entry name" value="Type I PLP-dependent aspartate aminotransferase-like (Major domain)"/>
    <property type="match status" value="1"/>
</dbReference>
<dbReference type="HAMAP" id="MF_00051">
    <property type="entry name" value="SHMT"/>
    <property type="match status" value="1"/>
</dbReference>
<dbReference type="InterPro" id="IPR015424">
    <property type="entry name" value="PyrdxlP-dep_Trfase"/>
</dbReference>
<dbReference type="InterPro" id="IPR015421">
    <property type="entry name" value="PyrdxlP-dep_Trfase_major"/>
</dbReference>
<dbReference type="InterPro" id="IPR015422">
    <property type="entry name" value="PyrdxlP-dep_Trfase_small"/>
</dbReference>
<dbReference type="InterPro" id="IPR001085">
    <property type="entry name" value="Ser_HO-MeTrfase"/>
</dbReference>
<dbReference type="InterPro" id="IPR049943">
    <property type="entry name" value="Ser_HO-MeTrfase-like"/>
</dbReference>
<dbReference type="InterPro" id="IPR019798">
    <property type="entry name" value="Ser_HO-MeTrfase_PLP_BS"/>
</dbReference>
<dbReference type="InterPro" id="IPR039429">
    <property type="entry name" value="SHMT-like_dom"/>
</dbReference>
<dbReference type="NCBIfam" id="NF000586">
    <property type="entry name" value="PRK00011.1"/>
    <property type="match status" value="1"/>
</dbReference>
<dbReference type="PANTHER" id="PTHR11680">
    <property type="entry name" value="SERINE HYDROXYMETHYLTRANSFERASE"/>
    <property type="match status" value="1"/>
</dbReference>
<dbReference type="PANTHER" id="PTHR11680:SF35">
    <property type="entry name" value="SERINE HYDROXYMETHYLTRANSFERASE 1"/>
    <property type="match status" value="1"/>
</dbReference>
<dbReference type="Pfam" id="PF00464">
    <property type="entry name" value="SHMT"/>
    <property type="match status" value="1"/>
</dbReference>
<dbReference type="PIRSF" id="PIRSF000412">
    <property type="entry name" value="SHMT"/>
    <property type="match status" value="1"/>
</dbReference>
<dbReference type="SUPFAM" id="SSF53383">
    <property type="entry name" value="PLP-dependent transferases"/>
    <property type="match status" value="1"/>
</dbReference>
<dbReference type="PROSITE" id="PS00096">
    <property type="entry name" value="SHMT"/>
    <property type="match status" value="1"/>
</dbReference>
<reference key="1">
    <citation type="journal article" date="2001" name="DNA Res.">
        <title>Complete genomic sequence of the filamentous nitrogen-fixing cyanobacterium Anabaena sp. strain PCC 7120.</title>
        <authorList>
            <person name="Kaneko T."/>
            <person name="Nakamura Y."/>
            <person name="Wolk C.P."/>
            <person name="Kuritz T."/>
            <person name="Sasamoto S."/>
            <person name="Watanabe A."/>
            <person name="Iriguchi M."/>
            <person name="Ishikawa A."/>
            <person name="Kawashima K."/>
            <person name="Kimura T."/>
            <person name="Kishida Y."/>
            <person name="Kohara M."/>
            <person name="Matsumoto M."/>
            <person name="Matsuno A."/>
            <person name="Muraki A."/>
            <person name="Nakazaki N."/>
            <person name="Shimpo S."/>
            <person name="Sugimoto M."/>
            <person name="Takazawa M."/>
            <person name="Yamada M."/>
            <person name="Yasuda M."/>
            <person name="Tabata S."/>
        </authorList>
    </citation>
    <scope>NUCLEOTIDE SEQUENCE [LARGE SCALE GENOMIC DNA]</scope>
    <source>
        <strain>PCC 7120 / SAG 25.82 / UTEX 2576</strain>
    </source>
</reference>
<proteinExistence type="inferred from homology"/>
<evidence type="ECO:0000255" key="1">
    <source>
        <dbReference type="HAMAP-Rule" id="MF_00051"/>
    </source>
</evidence>
<gene>
    <name evidence="1" type="primary">glyA</name>
    <name type="ordered locus">alr4806</name>
</gene>
<accession>Q8YMW8</accession>
<organism>
    <name type="scientific">Nostoc sp. (strain PCC 7120 / SAG 25.82 / UTEX 2576)</name>
    <dbReference type="NCBI Taxonomy" id="103690"/>
    <lineage>
        <taxon>Bacteria</taxon>
        <taxon>Bacillati</taxon>
        <taxon>Cyanobacteriota</taxon>
        <taxon>Cyanophyceae</taxon>
        <taxon>Nostocales</taxon>
        <taxon>Nostocaceae</taxon>
        <taxon>Nostoc</taxon>
    </lineage>
</organism>
<name>GLYA_NOSS1</name>